<feature type="chain" id="PRO_1000097651" description="Ribose-5-phosphate isomerase A">
    <location>
        <begin position="1"/>
        <end position="231"/>
    </location>
</feature>
<feature type="active site" description="Proton acceptor" evidence="1">
    <location>
        <position position="107"/>
    </location>
</feature>
<feature type="binding site" evidence="1">
    <location>
        <begin position="32"/>
        <end position="35"/>
    </location>
    <ligand>
        <name>substrate</name>
    </ligand>
</feature>
<feature type="binding site" evidence="1">
    <location>
        <begin position="85"/>
        <end position="88"/>
    </location>
    <ligand>
        <name>substrate</name>
    </ligand>
</feature>
<feature type="binding site" evidence="1">
    <location>
        <begin position="98"/>
        <end position="101"/>
    </location>
    <ligand>
        <name>substrate</name>
    </ligand>
</feature>
<feature type="binding site" evidence="1">
    <location>
        <position position="125"/>
    </location>
    <ligand>
        <name>substrate</name>
    </ligand>
</feature>
<organism>
    <name type="scientific">Burkholderia orbicola (strain MC0-3)</name>
    <dbReference type="NCBI Taxonomy" id="406425"/>
    <lineage>
        <taxon>Bacteria</taxon>
        <taxon>Pseudomonadati</taxon>
        <taxon>Pseudomonadota</taxon>
        <taxon>Betaproteobacteria</taxon>
        <taxon>Burkholderiales</taxon>
        <taxon>Burkholderiaceae</taxon>
        <taxon>Burkholderia</taxon>
        <taxon>Burkholderia cepacia complex</taxon>
        <taxon>Burkholderia orbicola</taxon>
    </lineage>
</organism>
<proteinExistence type="inferred from homology"/>
<keyword id="KW-0413">Isomerase</keyword>
<dbReference type="EC" id="5.3.1.6" evidence="1"/>
<dbReference type="EMBL" id="CP000958">
    <property type="protein sequence ID" value="ACA90700.1"/>
    <property type="molecule type" value="Genomic_DNA"/>
</dbReference>
<dbReference type="RefSeq" id="WP_006476119.1">
    <property type="nucleotide sequence ID" value="NC_010508.1"/>
</dbReference>
<dbReference type="SMR" id="B1K0R9"/>
<dbReference type="GeneID" id="83048324"/>
<dbReference type="KEGG" id="bcm:Bcenmc03_1525"/>
<dbReference type="HOGENOM" id="CLU_056590_1_1_4"/>
<dbReference type="UniPathway" id="UPA00115">
    <property type="reaction ID" value="UER00412"/>
</dbReference>
<dbReference type="Proteomes" id="UP000002169">
    <property type="component" value="Chromosome 1"/>
</dbReference>
<dbReference type="GO" id="GO:0005829">
    <property type="term" value="C:cytosol"/>
    <property type="evidence" value="ECO:0007669"/>
    <property type="project" value="TreeGrafter"/>
</dbReference>
<dbReference type="GO" id="GO:0004751">
    <property type="term" value="F:ribose-5-phosphate isomerase activity"/>
    <property type="evidence" value="ECO:0007669"/>
    <property type="project" value="UniProtKB-UniRule"/>
</dbReference>
<dbReference type="GO" id="GO:0006014">
    <property type="term" value="P:D-ribose metabolic process"/>
    <property type="evidence" value="ECO:0007669"/>
    <property type="project" value="TreeGrafter"/>
</dbReference>
<dbReference type="GO" id="GO:0009052">
    <property type="term" value="P:pentose-phosphate shunt, non-oxidative branch"/>
    <property type="evidence" value="ECO:0007669"/>
    <property type="project" value="UniProtKB-UniRule"/>
</dbReference>
<dbReference type="CDD" id="cd01398">
    <property type="entry name" value="RPI_A"/>
    <property type="match status" value="1"/>
</dbReference>
<dbReference type="FunFam" id="3.40.50.1360:FF:000001">
    <property type="entry name" value="Ribose-5-phosphate isomerase A"/>
    <property type="match status" value="1"/>
</dbReference>
<dbReference type="Gene3D" id="3.30.70.260">
    <property type="match status" value="1"/>
</dbReference>
<dbReference type="Gene3D" id="3.40.50.1360">
    <property type="match status" value="1"/>
</dbReference>
<dbReference type="HAMAP" id="MF_00170">
    <property type="entry name" value="Rib_5P_isom_A"/>
    <property type="match status" value="1"/>
</dbReference>
<dbReference type="InterPro" id="IPR037171">
    <property type="entry name" value="NagB/RpiA_transferase-like"/>
</dbReference>
<dbReference type="InterPro" id="IPR020672">
    <property type="entry name" value="Ribose5P_isomerase_typA_subgr"/>
</dbReference>
<dbReference type="InterPro" id="IPR004788">
    <property type="entry name" value="Ribose5P_isomerase_type_A"/>
</dbReference>
<dbReference type="NCBIfam" id="NF001924">
    <property type="entry name" value="PRK00702.1"/>
    <property type="match status" value="1"/>
</dbReference>
<dbReference type="NCBIfam" id="TIGR00021">
    <property type="entry name" value="rpiA"/>
    <property type="match status" value="1"/>
</dbReference>
<dbReference type="PANTHER" id="PTHR11934">
    <property type="entry name" value="RIBOSE-5-PHOSPHATE ISOMERASE"/>
    <property type="match status" value="1"/>
</dbReference>
<dbReference type="PANTHER" id="PTHR11934:SF0">
    <property type="entry name" value="RIBOSE-5-PHOSPHATE ISOMERASE"/>
    <property type="match status" value="1"/>
</dbReference>
<dbReference type="Pfam" id="PF06026">
    <property type="entry name" value="Rib_5-P_isom_A"/>
    <property type="match status" value="1"/>
</dbReference>
<dbReference type="SUPFAM" id="SSF75445">
    <property type="entry name" value="D-ribose-5-phosphate isomerase (RpiA), lid domain"/>
    <property type="match status" value="1"/>
</dbReference>
<dbReference type="SUPFAM" id="SSF100950">
    <property type="entry name" value="NagB/RpiA/CoA transferase-like"/>
    <property type="match status" value="1"/>
</dbReference>
<gene>
    <name evidence="1" type="primary">rpiA</name>
    <name type="ordered locus">Bcenmc03_1525</name>
</gene>
<name>RPIA_BURO0</name>
<sequence length="231" mass="23966">MTQDELKRLVGQAAADYVIQNVPEGAVIGVGTGSTANCFIDALAAVKSRYRGAVSSSIATTERLKSHGIKVFDLNEIESLQVYVDGADEIDAGGAMIKGGGGALTREKIVASVADTFVCIADASKRVPVLGAFPLPIEVVPMARTAIGRRVTALGGVPVLRVTKDGAPYITDNGNEIIDVKGLQIADPRGFEAQVNAWPGVVTVGLFAERGANLCLLGTENGVETIVYPAG</sequence>
<reference key="1">
    <citation type="submission" date="2008-02" db="EMBL/GenBank/DDBJ databases">
        <title>Complete sequence of chromosome 1 of Burkholderia cenocepacia MC0-3.</title>
        <authorList>
            <person name="Copeland A."/>
            <person name="Lucas S."/>
            <person name="Lapidus A."/>
            <person name="Barry K."/>
            <person name="Bruce D."/>
            <person name="Goodwin L."/>
            <person name="Glavina del Rio T."/>
            <person name="Dalin E."/>
            <person name="Tice H."/>
            <person name="Pitluck S."/>
            <person name="Chain P."/>
            <person name="Malfatti S."/>
            <person name="Shin M."/>
            <person name="Vergez L."/>
            <person name="Schmutz J."/>
            <person name="Larimer F."/>
            <person name="Land M."/>
            <person name="Hauser L."/>
            <person name="Kyrpides N."/>
            <person name="Mikhailova N."/>
            <person name="Tiedje J."/>
            <person name="Richardson P."/>
        </authorList>
    </citation>
    <scope>NUCLEOTIDE SEQUENCE [LARGE SCALE GENOMIC DNA]</scope>
    <source>
        <strain>MC0-3</strain>
    </source>
</reference>
<accession>B1K0R9</accession>
<protein>
    <recommendedName>
        <fullName evidence="1">Ribose-5-phosphate isomerase A</fullName>
        <ecNumber evidence="1">5.3.1.6</ecNumber>
    </recommendedName>
    <alternativeName>
        <fullName evidence="1">Phosphoriboisomerase A</fullName>
        <shortName evidence="1">PRI</shortName>
    </alternativeName>
</protein>
<comment type="function">
    <text evidence="1">Catalyzes the reversible conversion of ribose-5-phosphate to ribulose 5-phosphate.</text>
</comment>
<comment type="catalytic activity">
    <reaction evidence="1">
        <text>aldehydo-D-ribose 5-phosphate = D-ribulose 5-phosphate</text>
        <dbReference type="Rhea" id="RHEA:14657"/>
        <dbReference type="ChEBI" id="CHEBI:58121"/>
        <dbReference type="ChEBI" id="CHEBI:58273"/>
        <dbReference type="EC" id="5.3.1.6"/>
    </reaction>
</comment>
<comment type="pathway">
    <text evidence="1">Carbohydrate degradation; pentose phosphate pathway; D-ribose 5-phosphate from D-ribulose 5-phosphate (non-oxidative stage): step 1/1.</text>
</comment>
<comment type="subunit">
    <text evidence="1">Homodimer.</text>
</comment>
<comment type="similarity">
    <text evidence="1">Belongs to the ribose 5-phosphate isomerase family.</text>
</comment>
<evidence type="ECO:0000255" key="1">
    <source>
        <dbReference type="HAMAP-Rule" id="MF_00170"/>
    </source>
</evidence>